<evidence type="ECO:0000250" key="1">
    <source>
        <dbReference type="UniProtKB" id="O67010"/>
    </source>
</evidence>
<evidence type="ECO:0000250" key="2">
    <source>
        <dbReference type="UniProtKB" id="Q9NXH9"/>
    </source>
</evidence>
<evidence type="ECO:0000255" key="3"/>
<evidence type="ECO:0000255" key="4">
    <source>
        <dbReference type="PROSITE-ProRule" id="PRU00723"/>
    </source>
</evidence>
<evidence type="ECO:0000255" key="5">
    <source>
        <dbReference type="PROSITE-ProRule" id="PRU00958"/>
    </source>
</evidence>
<evidence type="ECO:0000256" key="6">
    <source>
        <dbReference type="SAM" id="MobiDB-lite"/>
    </source>
</evidence>
<evidence type="ECO:0000305" key="7"/>
<evidence type="ECO:0000312" key="8">
    <source>
        <dbReference type="MGI" id="MGI:1289155"/>
    </source>
</evidence>
<evidence type="ECO:0007744" key="9">
    <source>
    </source>
</evidence>
<evidence type="ECO:0007744" key="10">
    <source>
    </source>
</evidence>
<sequence>MSLARTILWLSRPLRPAHSLCRAQFMERKAQKPPSPPAMENGTRSWEERPPADPVATVTEGAAKIVFPSANEVFYNPVQEFNRDLTCAVITEFARIHLGAKGIQIKVPGEKDSEKIAVDLSDQEEETAGKNENLAPGDWPRTAAVGEICEEGLRVLEGLAASGLRSIRFALEVPGLQSVVANDASARAVELMHRNVELNGVAHLVQPNQADARMLMYQHQKAPERFDVIDLDPYGSPAPFLDAAVQAVSDGGLLCVTCTDMAVLAGNSGETCYSKYGAMALKSRACHEMALRIVLHSLDLHANCYQRYIVPLLSISADFYIRVFVRVFTGQAKVKSSASKQALVFQCVGCGAFYLQRLGKASGDPGGRIKFSAACGPPVTPECEHCGQRHQLGGPMWAEPIHDLDFVGRVLDAVTTNPGRFHTSMRIQGVLSVVTEELPDVPLYYTLDQLSSTIHCNTPRLLQLRSALLHAGFRVSLSHACKNAVKTDAPPEALWDIMRCWEKECPVKRERLSESSPAFRILAVEPRLKANFNIREDANPSSRQRGLKRFQANPEANWGPRPRARPGGKAASEDLAGRRRLLQNKRKEPAEDPAQRAARLKTFPCKRFKEGTCQLGDQCCYSHSPAAPVASGDIPIEECPETTTKISPGPKAAAGGIPGPGVD</sequence>
<protein>
    <recommendedName>
        <fullName>tRNA (guanine(26)-N(2))-dimethyltransferase</fullName>
        <ecNumber evidence="5">2.1.1.216</ecNumber>
    </recommendedName>
    <alternativeName>
        <fullName>tRNA 2,2-dimethylguanosine-26 methyltransferase</fullName>
    </alternativeName>
    <alternativeName>
        <fullName>tRNA(guanine-26,N(2)-N(2)) methyltransferase</fullName>
    </alternativeName>
    <alternativeName>
        <fullName>tRNA(m(2,2)G26)dimethyltransferase</fullName>
    </alternativeName>
</protein>
<proteinExistence type="evidence at protein level"/>
<gene>
    <name evidence="8" type="primary">Trmt1</name>
    <name evidence="8" type="synonym">D8Ertd812e</name>
</gene>
<reference key="1">
    <citation type="journal article" date="2005" name="Science">
        <title>The transcriptional landscape of the mammalian genome.</title>
        <authorList>
            <person name="Carninci P."/>
            <person name="Kasukawa T."/>
            <person name="Katayama S."/>
            <person name="Gough J."/>
            <person name="Frith M.C."/>
            <person name="Maeda N."/>
            <person name="Oyama R."/>
            <person name="Ravasi T."/>
            <person name="Lenhard B."/>
            <person name="Wells C."/>
            <person name="Kodzius R."/>
            <person name="Shimokawa K."/>
            <person name="Bajic V.B."/>
            <person name="Brenner S.E."/>
            <person name="Batalov S."/>
            <person name="Forrest A.R."/>
            <person name="Zavolan M."/>
            <person name="Davis M.J."/>
            <person name="Wilming L.G."/>
            <person name="Aidinis V."/>
            <person name="Allen J.E."/>
            <person name="Ambesi-Impiombato A."/>
            <person name="Apweiler R."/>
            <person name="Aturaliya R.N."/>
            <person name="Bailey T.L."/>
            <person name="Bansal M."/>
            <person name="Baxter L."/>
            <person name="Beisel K.W."/>
            <person name="Bersano T."/>
            <person name="Bono H."/>
            <person name="Chalk A.M."/>
            <person name="Chiu K.P."/>
            <person name="Choudhary V."/>
            <person name="Christoffels A."/>
            <person name="Clutterbuck D.R."/>
            <person name="Crowe M.L."/>
            <person name="Dalla E."/>
            <person name="Dalrymple B.P."/>
            <person name="de Bono B."/>
            <person name="Della Gatta G."/>
            <person name="di Bernardo D."/>
            <person name="Down T."/>
            <person name="Engstrom P."/>
            <person name="Fagiolini M."/>
            <person name="Faulkner G."/>
            <person name="Fletcher C.F."/>
            <person name="Fukushima T."/>
            <person name="Furuno M."/>
            <person name="Futaki S."/>
            <person name="Gariboldi M."/>
            <person name="Georgii-Hemming P."/>
            <person name="Gingeras T.R."/>
            <person name="Gojobori T."/>
            <person name="Green R.E."/>
            <person name="Gustincich S."/>
            <person name="Harbers M."/>
            <person name="Hayashi Y."/>
            <person name="Hensch T.K."/>
            <person name="Hirokawa N."/>
            <person name="Hill D."/>
            <person name="Huminiecki L."/>
            <person name="Iacono M."/>
            <person name="Ikeo K."/>
            <person name="Iwama A."/>
            <person name="Ishikawa T."/>
            <person name="Jakt M."/>
            <person name="Kanapin A."/>
            <person name="Katoh M."/>
            <person name="Kawasawa Y."/>
            <person name="Kelso J."/>
            <person name="Kitamura H."/>
            <person name="Kitano H."/>
            <person name="Kollias G."/>
            <person name="Krishnan S.P."/>
            <person name="Kruger A."/>
            <person name="Kummerfeld S.K."/>
            <person name="Kurochkin I.V."/>
            <person name="Lareau L.F."/>
            <person name="Lazarevic D."/>
            <person name="Lipovich L."/>
            <person name="Liu J."/>
            <person name="Liuni S."/>
            <person name="McWilliam S."/>
            <person name="Madan Babu M."/>
            <person name="Madera M."/>
            <person name="Marchionni L."/>
            <person name="Matsuda H."/>
            <person name="Matsuzawa S."/>
            <person name="Miki H."/>
            <person name="Mignone F."/>
            <person name="Miyake S."/>
            <person name="Morris K."/>
            <person name="Mottagui-Tabar S."/>
            <person name="Mulder N."/>
            <person name="Nakano N."/>
            <person name="Nakauchi H."/>
            <person name="Ng P."/>
            <person name="Nilsson R."/>
            <person name="Nishiguchi S."/>
            <person name="Nishikawa S."/>
            <person name="Nori F."/>
            <person name="Ohara O."/>
            <person name="Okazaki Y."/>
            <person name="Orlando V."/>
            <person name="Pang K.C."/>
            <person name="Pavan W.J."/>
            <person name="Pavesi G."/>
            <person name="Pesole G."/>
            <person name="Petrovsky N."/>
            <person name="Piazza S."/>
            <person name="Reed J."/>
            <person name="Reid J.F."/>
            <person name="Ring B.Z."/>
            <person name="Ringwald M."/>
            <person name="Rost B."/>
            <person name="Ruan Y."/>
            <person name="Salzberg S.L."/>
            <person name="Sandelin A."/>
            <person name="Schneider C."/>
            <person name="Schoenbach C."/>
            <person name="Sekiguchi K."/>
            <person name="Semple C.A."/>
            <person name="Seno S."/>
            <person name="Sessa L."/>
            <person name="Sheng Y."/>
            <person name="Shibata Y."/>
            <person name="Shimada H."/>
            <person name="Shimada K."/>
            <person name="Silva D."/>
            <person name="Sinclair B."/>
            <person name="Sperling S."/>
            <person name="Stupka E."/>
            <person name="Sugiura K."/>
            <person name="Sultana R."/>
            <person name="Takenaka Y."/>
            <person name="Taki K."/>
            <person name="Tammoja K."/>
            <person name="Tan S.L."/>
            <person name="Tang S."/>
            <person name="Taylor M.S."/>
            <person name="Tegner J."/>
            <person name="Teichmann S.A."/>
            <person name="Ueda H.R."/>
            <person name="van Nimwegen E."/>
            <person name="Verardo R."/>
            <person name="Wei C.L."/>
            <person name="Yagi K."/>
            <person name="Yamanishi H."/>
            <person name="Zabarovsky E."/>
            <person name="Zhu S."/>
            <person name="Zimmer A."/>
            <person name="Hide W."/>
            <person name="Bult C."/>
            <person name="Grimmond S.M."/>
            <person name="Teasdale R.D."/>
            <person name="Liu E.T."/>
            <person name="Brusic V."/>
            <person name="Quackenbush J."/>
            <person name="Wahlestedt C."/>
            <person name="Mattick J.S."/>
            <person name="Hume D.A."/>
            <person name="Kai C."/>
            <person name="Sasaki D."/>
            <person name="Tomaru Y."/>
            <person name="Fukuda S."/>
            <person name="Kanamori-Katayama M."/>
            <person name="Suzuki M."/>
            <person name="Aoki J."/>
            <person name="Arakawa T."/>
            <person name="Iida J."/>
            <person name="Imamura K."/>
            <person name="Itoh M."/>
            <person name="Kato T."/>
            <person name="Kawaji H."/>
            <person name="Kawagashira N."/>
            <person name="Kawashima T."/>
            <person name="Kojima M."/>
            <person name="Kondo S."/>
            <person name="Konno H."/>
            <person name="Nakano K."/>
            <person name="Ninomiya N."/>
            <person name="Nishio T."/>
            <person name="Okada M."/>
            <person name="Plessy C."/>
            <person name="Shibata K."/>
            <person name="Shiraki T."/>
            <person name="Suzuki S."/>
            <person name="Tagami M."/>
            <person name="Waki K."/>
            <person name="Watahiki A."/>
            <person name="Okamura-Oho Y."/>
            <person name="Suzuki H."/>
            <person name="Kawai J."/>
            <person name="Hayashizaki Y."/>
        </authorList>
    </citation>
    <scope>NUCLEOTIDE SEQUENCE [LARGE SCALE MRNA]</scope>
    <source>
        <strain>C57BL/6J</strain>
        <strain>NOD</strain>
    </source>
</reference>
<reference key="2">
    <citation type="journal article" date="2009" name="PLoS Biol.">
        <title>Lineage-specific biology revealed by a finished genome assembly of the mouse.</title>
        <authorList>
            <person name="Church D.M."/>
            <person name="Goodstadt L."/>
            <person name="Hillier L.W."/>
            <person name="Zody M.C."/>
            <person name="Goldstein S."/>
            <person name="She X."/>
            <person name="Bult C.J."/>
            <person name="Agarwala R."/>
            <person name="Cherry J.L."/>
            <person name="DiCuccio M."/>
            <person name="Hlavina W."/>
            <person name="Kapustin Y."/>
            <person name="Meric P."/>
            <person name="Maglott D."/>
            <person name="Birtle Z."/>
            <person name="Marques A.C."/>
            <person name="Graves T."/>
            <person name="Zhou S."/>
            <person name="Teague B."/>
            <person name="Potamousis K."/>
            <person name="Churas C."/>
            <person name="Place M."/>
            <person name="Herschleb J."/>
            <person name="Runnheim R."/>
            <person name="Forrest D."/>
            <person name="Amos-Landgraf J."/>
            <person name="Schwartz D.C."/>
            <person name="Cheng Z."/>
            <person name="Lindblad-Toh K."/>
            <person name="Eichler E.E."/>
            <person name="Ponting C.P."/>
        </authorList>
    </citation>
    <scope>NUCLEOTIDE SEQUENCE [LARGE SCALE GENOMIC DNA]</scope>
    <source>
        <strain>C57BL/6J</strain>
    </source>
</reference>
<reference key="3">
    <citation type="journal article" date="2004" name="Genome Res.">
        <title>The status, quality, and expansion of the NIH full-length cDNA project: the Mammalian Gene Collection (MGC).</title>
        <authorList>
            <consortium name="The MGC Project Team"/>
        </authorList>
    </citation>
    <scope>NUCLEOTIDE SEQUENCE [LARGE SCALE MRNA] (ISOFORM 2)</scope>
    <source>
        <strain>FVB/N</strain>
    </source>
</reference>
<reference key="4">
    <citation type="journal article" date="2007" name="Proc. Natl. Acad. Sci. U.S.A.">
        <title>Large-scale phosphorylation analysis of mouse liver.</title>
        <authorList>
            <person name="Villen J."/>
            <person name="Beausoleil S.A."/>
            <person name="Gerber S.A."/>
            <person name="Gygi S.P."/>
        </authorList>
    </citation>
    <scope>PHOSPHORYLATION [LARGE SCALE ANALYSIS] AT SER-121</scope>
    <scope>IDENTIFICATION BY MASS SPECTROMETRY [LARGE SCALE ANALYSIS]</scope>
    <source>
        <tissue>Liver</tissue>
    </source>
</reference>
<reference key="5">
    <citation type="journal article" date="2010" name="Cell">
        <title>A tissue-specific atlas of mouse protein phosphorylation and expression.</title>
        <authorList>
            <person name="Huttlin E.L."/>
            <person name="Jedrychowski M.P."/>
            <person name="Elias J.E."/>
            <person name="Goswami T."/>
            <person name="Rad R."/>
            <person name="Beausoleil S.A."/>
            <person name="Villen J."/>
            <person name="Haas W."/>
            <person name="Sowa M.E."/>
            <person name="Gygi S.P."/>
        </authorList>
    </citation>
    <scope>PHOSPHORYLATION [LARGE SCALE ANALYSIS] AT SER-121</scope>
    <scope>IDENTIFICATION BY MASS SPECTROMETRY [LARGE SCALE ANALYSIS]</scope>
    <source>
        <tissue>Brain</tissue>
        <tissue>Kidney</tissue>
        <tissue>Liver</tissue>
        <tissue>Lung</tissue>
        <tissue>Spleen</tissue>
        <tissue>Testis</tissue>
    </source>
</reference>
<accession>Q3TX08</accession>
<accession>A0A0R4IZW7</accession>
<accession>Q3TBY4</accession>
<accession>Q8R2M8</accession>
<feature type="transit peptide" description="Mitochondrion" evidence="3">
    <location>
        <begin position="1"/>
        <end position="16"/>
    </location>
</feature>
<feature type="chain" id="PRO_0000147672" description="tRNA (guanine(26)-N(2))-dimethyltransferase" evidence="3">
    <location>
        <begin position="17"/>
        <end position="663"/>
    </location>
</feature>
<feature type="domain" description="Trm1 methyltransferase" evidence="5">
    <location>
        <begin position="56"/>
        <end position="498"/>
    </location>
</feature>
<feature type="zinc finger region" description="C3H1-type" evidence="4">
    <location>
        <begin position="599"/>
        <end position="626"/>
    </location>
</feature>
<feature type="region of interest" description="Disordered" evidence="6">
    <location>
        <begin position="534"/>
        <end position="574"/>
    </location>
</feature>
<feature type="region of interest" description="Disordered" evidence="6">
    <location>
        <begin position="632"/>
        <end position="663"/>
    </location>
</feature>
<feature type="binding site" evidence="1">
    <location>
        <position position="83"/>
    </location>
    <ligand>
        <name>S-adenosyl-L-methionine</name>
        <dbReference type="ChEBI" id="CHEBI:59789"/>
    </ligand>
</feature>
<feature type="binding site" evidence="1">
    <location>
        <position position="165"/>
    </location>
    <ligand>
        <name>S-adenosyl-L-methionine</name>
        <dbReference type="ChEBI" id="CHEBI:59789"/>
    </ligand>
</feature>
<feature type="binding site" evidence="1">
    <location>
        <position position="183"/>
    </location>
    <ligand>
        <name>S-adenosyl-L-methionine</name>
        <dbReference type="ChEBI" id="CHEBI:59789"/>
    </ligand>
</feature>
<feature type="binding site" evidence="1">
    <location>
        <position position="347"/>
    </location>
    <ligand>
        <name>Zn(2+)</name>
        <dbReference type="ChEBI" id="CHEBI:29105"/>
    </ligand>
</feature>
<feature type="binding site" evidence="1">
    <location>
        <position position="350"/>
    </location>
    <ligand>
        <name>Zn(2+)</name>
        <dbReference type="ChEBI" id="CHEBI:29105"/>
    </ligand>
</feature>
<feature type="binding site" evidence="1">
    <location>
        <position position="383"/>
    </location>
    <ligand>
        <name>Zn(2+)</name>
        <dbReference type="ChEBI" id="CHEBI:29105"/>
    </ligand>
</feature>
<feature type="binding site" evidence="1">
    <location>
        <position position="386"/>
    </location>
    <ligand>
        <name>Zn(2+)</name>
        <dbReference type="ChEBI" id="CHEBI:29105"/>
    </ligand>
</feature>
<feature type="modified residue" description="Phosphoserine" evidence="9 10">
    <location>
        <position position="121"/>
    </location>
</feature>
<feature type="modified residue" description="Phosphoserine" evidence="2">
    <location>
        <position position="516"/>
    </location>
</feature>
<feature type="modified residue" description="Phosphoserine" evidence="2">
    <location>
        <position position="624"/>
    </location>
</feature>
<feature type="splice variant" id="VSP_062551" description="In isoform 2.">
    <location>
        <begin position="1"/>
        <end position="38"/>
    </location>
</feature>
<feature type="sequence conflict" description="In Ref. 1; BAE42173." evidence="7" ref="1">
    <original>SW</original>
    <variation>FC</variation>
    <location>
        <begin position="45"/>
        <end position="46"/>
    </location>
</feature>
<feature type="sequence conflict" description="In Ref. 1; BAE42173 and 3; AAH27404." evidence="7" ref="1 3">
    <original>D</original>
    <variation>E</variation>
    <location>
        <position position="112"/>
    </location>
</feature>
<feature type="sequence conflict" description="In Ref. 1; BAE42173." evidence="7" ref="1">
    <original>G</original>
    <variation>D</variation>
    <location>
        <position position="175"/>
    </location>
</feature>
<feature type="sequence conflict" description="In Ref. 1; BAE42173 and 3; AAH27404." evidence="7" ref="1 3">
    <original>G</original>
    <variation>V</variation>
    <location>
        <position position="656"/>
    </location>
</feature>
<feature type="short sequence motif" description="Nuclear localization signal" evidence="2">
    <location sequence="Q3TX08-2">
        <begin position="540"/>
        <end position="572"/>
    </location>
</feature>
<keyword id="KW-0025">Alternative splicing</keyword>
<keyword id="KW-0963">Cytoplasm</keyword>
<keyword id="KW-0479">Metal-binding</keyword>
<keyword id="KW-0489">Methyltransferase</keyword>
<keyword id="KW-0496">Mitochondrion</keyword>
<keyword id="KW-0539">Nucleus</keyword>
<keyword id="KW-0597">Phosphoprotein</keyword>
<keyword id="KW-1185">Reference proteome</keyword>
<keyword id="KW-0694">RNA-binding</keyword>
<keyword id="KW-0949">S-adenosyl-L-methionine</keyword>
<keyword id="KW-0808">Transferase</keyword>
<keyword id="KW-0809">Transit peptide</keyword>
<keyword id="KW-0819">tRNA processing</keyword>
<keyword id="KW-0820">tRNA-binding</keyword>
<keyword id="KW-0862">Zinc</keyword>
<keyword id="KW-0863">Zinc-finger</keyword>
<dbReference type="EC" id="2.1.1.216" evidence="5"/>
<dbReference type="EMBL" id="AK159467">
    <property type="protein sequence ID" value="BAE35108.1"/>
    <property type="molecule type" value="mRNA"/>
</dbReference>
<dbReference type="EMBL" id="AK171002">
    <property type="protein sequence ID" value="BAE42173.1"/>
    <property type="molecule type" value="mRNA"/>
</dbReference>
<dbReference type="EMBL" id="BC027404">
    <property type="protein sequence ID" value="AAH27404.1"/>
    <property type="molecule type" value="mRNA"/>
</dbReference>
<dbReference type="CCDS" id="CCDS40410.2"/>
<dbReference type="RefSeq" id="NP_001158031.1">
    <property type="nucleotide sequence ID" value="NM_001164559.1"/>
</dbReference>
<dbReference type="RefSeq" id="NP_001158032.1">
    <property type="nucleotide sequence ID" value="NM_001164560.1"/>
</dbReference>
<dbReference type="RefSeq" id="NP_932137.2">
    <property type="nucleotide sequence ID" value="NM_198020.2"/>
</dbReference>
<dbReference type="SMR" id="Q3TX08"/>
<dbReference type="BioGRID" id="229336">
    <property type="interactions" value="25"/>
</dbReference>
<dbReference type="FunCoup" id="Q3TX08">
    <property type="interactions" value="3171"/>
</dbReference>
<dbReference type="STRING" id="10090.ENSMUSP00000001974"/>
<dbReference type="ChEMBL" id="CHEMBL4879462"/>
<dbReference type="GlyGen" id="Q3TX08">
    <property type="glycosylation" value="2 sites, 1 N-linked glycan (1 site), 1 O-linked glycan (1 site)"/>
</dbReference>
<dbReference type="iPTMnet" id="Q3TX08"/>
<dbReference type="PhosphoSitePlus" id="Q3TX08"/>
<dbReference type="jPOST" id="Q3TX08"/>
<dbReference type="PaxDb" id="10090-ENSMUSP00000001974"/>
<dbReference type="PeptideAtlas" id="Q3TX08"/>
<dbReference type="ProteomicsDB" id="298130"/>
<dbReference type="Pumba" id="Q3TX08"/>
<dbReference type="Antibodypedia" id="13510">
    <property type="antibodies" value="157 antibodies from 27 providers"/>
</dbReference>
<dbReference type="Ensembl" id="ENSMUST00000001974.11">
    <property type="protein sequence ID" value="ENSMUSP00000001974.5"/>
    <property type="gene ID" value="ENSMUSG00000001909.17"/>
</dbReference>
<dbReference type="Ensembl" id="ENSMUST00000109767.9">
    <property type="protein sequence ID" value="ENSMUSP00000105389.3"/>
    <property type="gene ID" value="ENSMUSG00000001909.17"/>
</dbReference>
<dbReference type="GeneID" id="212528"/>
<dbReference type="KEGG" id="mmu:212528"/>
<dbReference type="AGR" id="MGI:1289155"/>
<dbReference type="CTD" id="55621"/>
<dbReference type="MGI" id="MGI:1289155">
    <property type="gene designation" value="Trmt1"/>
</dbReference>
<dbReference type="VEuPathDB" id="HostDB:ENSMUSG00000001909"/>
<dbReference type="eggNOG" id="KOG1253">
    <property type="taxonomic scope" value="Eukaryota"/>
</dbReference>
<dbReference type="GeneTree" id="ENSGT00530000063646"/>
<dbReference type="InParanoid" id="Q3TX08"/>
<dbReference type="OMA" id="MKCCHEM"/>
<dbReference type="OrthoDB" id="6349953at2759"/>
<dbReference type="PhylomeDB" id="Q3TX08"/>
<dbReference type="TreeFam" id="TF300851"/>
<dbReference type="BioGRID-ORCS" id="212528">
    <property type="hits" value="2 hits in 78 CRISPR screens"/>
</dbReference>
<dbReference type="ChiTaRS" id="Trmt1">
    <property type="organism name" value="mouse"/>
</dbReference>
<dbReference type="PRO" id="PR:Q3TX08"/>
<dbReference type="Proteomes" id="UP000000589">
    <property type="component" value="Chromosome 8"/>
</dbReference>
<dbReference type="RNAct" id="Q3TX08">
    <property type="molecule type" value="protein"/>
</dbReference>
<dbReference type="Bgee" id="ENSMUSG00000001909">
    <property type="expression patterns" value="Expressed in spermatocyte and 272 other cell types or tissues"/>
</dbReference>
<dbReference type="GO" id="GO:0005737">
    <property type="term" value="C:cytoplasm"/>
    <property type="evidence" value="ECO:0000250"/>
    <property type="project" value="UniProtKB"/>
</dbReference>
<dbReference type="GO" id="GO:0005634">
    <property type="term" value="C:nucleus"/>
    <property type="evidence" value="ECO:0000250"/>
    <property type="project" value="UniProtKB"/>
</dbReference>
<dbReference type="GO" id="GO:0160104">
    <property type="term" value="F:tRNA (guanine(26)-N2)-dimethyltransferase activity"/>
    <property type="evidence" value="ECO:0000250"/>
    <property type="project" value="UniProtKB"/>
</dbReference>
<dbReference type="GO" id="GO:0000049">
    <property type="term" value="F:tRNA binding"/>
    <property type="evidence" value="ECO:0007669"/>
    <property type="project" value="UniProtKB-KW"/>
</dbReference>
<dbReference type="GO" id="GO:0008270">
    <property type="term" value="F:zinc ion binding"/>
    <property type="evidence" value="ECO:0007669"/>
    <property type="project" value="UniProtKB-KW"/>
</dbReference>
<dbReference type="GO" id="GO:0002940">
    <property type="term" value="P:tRNA N2-guanine methylation"/>
    <property type="evidence" value="ECO:0000250"/>
    <property type="project" value="UniProtKB"/>
</dbReference>
<dbReference type="CDD" id="cd02440">
    <property type="entry name" value="AdoMet_MTases"/>
    <property type="match status" value="1"/>
</dbReference>
<dbReference type="FunFam" id="3.30.56.70:FF:000001">
    <property type="entry name" value="tRNA (guanine(26)-N(2))-dimethyltransferase"/>
    <property type="match status" value="1"/>
</dbReference>
<dbReference type="Gene3D" id="3.30.56.70">
    <property type="entry name" value="N2,N2-dimethylguanosine tRNA methyltransferase, C-terminal domain"/>
    <property type="match status" value="1"/>
</dbReference>
<dbReference type="Gene3D" id="3.40.50.150">
    <property type="entry name" value="Vaccinia Virus protein VP39"/>
    <property type="match status" value="1"/>
</dbReference>
<dbReference type="Gene3D" id="4.10.1000.10">
    <property type="entry name" value="Zinc finger, CCCH-type"/>
    <property type="match status" value="1"/>
</dbReference>
<dbReference type="InterPro" id="IPR029063">
    <property type="entry name" value="SAM-dependent_MTases_sf"/>
</dbReference>
<dbReference type="InterPro" id="IPR002905">
    <property type="entry name" value="Trm1"/>
</dbReference>
<dbReference type="InterPro" id="IPR042296">
    <property type="entry name" value="tRNA_met_Trm1_C"/>
</dbReference>
<dbReference type="InterPro" id="IPR000571">
    <property type="entry name" value="Znf_CCCH"/>
</dbReference>
<dbReference type="InterPro" id="IPR036855">
    <property type="entry name" value="Znf_CCCH_sf"/>
</dbReference>
<dbReference type="NCBIfam" id="TIGR00308">
    <property type="entry name" value="TRM1"/>
    <property type="match status" value="1"/>
</dbReference>
<dbReference type="PANTHER" id="PTHR10631">
    <property type="entry name" value="N 2 ,N 2 -DIMETHYLGUANOSINE TRNA METHYLTRANSFERASE"/>
    <property type="match status" value="1"/>
</dbReference>
<dbReference type="PANTHER" id="PTHR10631:SF3">
    <property type="entry name" value="TRNA (GUANINE(26)-N(2))-DIMETHYLTRANSFERASE"/>
    <property type="match status" value="1"/>
</dbReference>
<dbReference type="Pfam" id="PF02005">
    <property type="entry name" value="TRM"/>
    <property type="match status" value="1"/>
</dbReference>
<dbReference type="Pfam" id="PF00642">
    <property type="entry name" value="zf-CCCH"/>
    <property type="match status" value="1"/>
</dbReference>
<dbReference type="SMART" id="SM00356">
    <property type="entry name" value="ZnF_C3H1"/>
    <property type="match status" value="1"/>
</dbReference>
<dbReference type="SUPFAM" id="SSF90229">
    <property type="entry name" value="CCCH zinc finger"/>
    <property type="match status" value="1"/>
</dbReference>
<dbReference type="SUPFAM" id="SSF53335">
    <property type="entry name" value="S-adenosyl-L-methionine-dependent methyltransferases"/>
    <property type="match status" value="1"/>
</dbReference>
<dbReference type="PROSITE" id="PS51626">
    <property type="entry name" value="SAM_MT_TRM1"/>
    <property type="match status" value="1"/>
</dbReference>
<dbReference type="PROSITE" id="PS50103">
    <property type="entry name" value="ZF_C3H1"/>
    <property type="match status" value="1"/>
</dbReference>
<comment type="function">
    <text evidence="2">Dimethylates a single guanine residue at position 26 of most nuclear- and mitochondrial-encoded tRNAs using S-adenosyl-L-methionine as donor of the methyl groups (By similarity). tRNA guanine(26)-dimethylation is required for redox homeostasis and ensure proper cellular proliferation and oxidative stress survival (By similarity).</text>
</comment>
<comment type="catalytic activity">
    <reaction evidence="5">
        <text>guanosine(26) in tRNA + 2 S-adenosyl-L-methionine = N(2)-dimethylguanosine(26) in tRNA + 2 S-adenosyl-L-homocysteine + 2 H(+)</text>
        <dbReference type="Rhea" id="RHEA:43140"/>
        <dbReference type="Rhea" id="RHEA-COMP:10359"/>
        <dbReference type="Rhea" id="RHEA-COMP:10360"/>
        <dbReference type="ChEBI" id="CHEBI:15378"/>
        <dbReference type="ChEBI" id="CHEBI:57856"/>
        <dbReference type="ChEBI" id="CHEBI:59789"/>
        <dbReference type="ChEBI" id="CHEBI:74269"/>
        <dbReference type="ChEBI" id="CHEBI:74513"/>
        <dbReference type="EC" id="2.1.1.216"/>
    </reaction>
</comment>
<comment type="subcellular location">
    <molecule>Isoform 1</molecule>
    <subcellularLocation>
        <location evidence="2">Mitochondrion</location>
    </subcellularLocation>
</comment>
<comment type="subcellular location">
    <molecule>Isoform 2</molecule>
    <subcellularLocation>
        <location evidence="2">Nucleus</location>
    </subcellularLocation>
    <subcellularLocation>
        <location evidence="2">Cytoplasm</location>
    </subcellularLocation>
</comment>
<comment type="alternative products">
    <event type="alternative splicing"/>
    <isoform>
        <id>Q3TX08-1</id>
        <name>1</name>
        <sequence type="displayed"/>
    </isoform>
    <isoform>
        <id>Q3TX08-2</id>
        <name>2</name>
        <sequence type="described" ref="VSP_062551"/>
    </isoform>
</comment>
<comment type="similarity">
    <text evidence="5">Belongs to the class I-like SAM-binding methyltransferase superfamily. Trm1 family.</text>
</comment>
<name>TRM1_MOUSE</name>
<organism>
    <name type="scientific">Mus musculus</name>
    <name type="common">Mouse</name>
    <dbReference type="NCBI Taxonomy" id="10090"/>
    <lineage>
        <taxon>Eukaryota</taxon>
        <taxon>Metazoa</taxon>
        <taxon>Chordata</taxon>
        <taxon>Craniata</taxon>
        <taxon>Vertebrata</taxon>
        <taxon>Euteleostomi</taxon>
        <taxon>Mammalia</taxon>
        <taxon>Eutheria</taxon>
        <taxon>Euarchontoglires</taxon>
        <taxon>Glires</taxon>
        <taxon>Rodentia</taxon>
        <taxon>Myomorpha</taxon>
        <taxon>Muroidea</taxon>
        <taxon>Muridae</taxon>
        <taxon>Murinae</taxon>
        <taxon>Mus</taxon>
        <taxon>Mus</taxon>
    </lineage>
</organism>